<name>RSMA_COXBN</name>
<comment type="function">
    <text evidence="1">Specifically dimethylates two adjacent adenosines (A1518 and A1519) in the loop of a conserved hairpin near the 3'-end of 16S rRNA in the 30S particle. May play a critical role in biogenesis of 30S subunits.</text>
</comment>
<comment type="catalytic activity">
    <reaction evidence="1">
        <text>adenosine(1518)/adenosine(1519) in 16S rRNA + 4 S-adenosyl-L-methionine = N(6)-dimethyladenosine(1518)/N(6)-dimethyladenosine(1519) in 16S rRNA + 4 S-adenosyl-L-homocysteine + 4 H(+)</text>
        <dbReference type="Rhea" id="RHEA:19609"/>
        <dbReference type="Rhea" id="RHEA-COMP:10232"/>
        <dbReference type="Rhea" id="RHEA-COMP:10233"/>
        <dbReference type="ChEBI" id="CHEBI:15378"/>
        <dbReference type="ChEBI" id="CHEBI:57856"/>
        <dbReference type="ChEBI" id="CHEBI:59789"/>
        <dbReference type="ChEBI" id="CHEBI:74411"/>
        <dbReference type="ChEBI" id="CHEBI:74493"/>
        <dbReference type="EC" id="2.1.1.182"/>
    </reaction>
</comment>
<comment type="subcellular location">
    <subcellularLocation>
        <location evidence="1">Cytoplasm</location>
    </subcellularLocation>
</comment>
<comment type="similarity">
    <text evidence="1">Belongs to the class I-like SAM-binding methyltransferase superfamily. rRNA adenine N(6)-methyltransferase family. RsmA subfamily.</text>
</comment>
<evidence type="ECO:0000255" key="1">
    <source>
        <dbReference type="HAMAP-Rule" id="MF_00607"/>
    </source>
</evidence>
<reference key="1">
    <citation type="journal article" date="2009" name="Infect. Immun.">
        <title>Comparative genomics reveal extensive transposon-mediated genomic plasticity and diversity among potential effector proteins within the genus Coxiella.</title>
        <authorList>
            <person name="Beare P.A."/>
            <person name="Unsworth N."/>
            <person name="Andoh M."/>
            <person name="Voth D.E."/>
            <person name="Omsland A."/>
            <person name="Gilk S.D."/>
            <person name="Williams K.P."/>
            <person name="Sobral B.W."/>
            <person name="Kupko J.J. III"/>
            <person name="Porcella S.F."/>
            <person name="Samuel J.E."/>
            <person name="Heinzen R.A."/>
        </authorList>
    </citation>
    <scope>NUCLEOTIDE SEQUENCE [LARGE SCALE GENOMIC DNA]</scope>
    <source>
        <strain>Dugway 5J108-111</strain>
    </source>
</reference>
<dbReference type="EC" id="2.1.1.182" evidence="1"/>
<dbReference type="EMBL" id="CP000733">
    <property type="protein sequence ID" value="ABS78047.1"/>
    <property type="molecule type" value="Genomic_DNA"/>
</dbReference>
<dbReference type="RefSeq" id="WP_011997406.1">
    <property type="nucleotide sequence ID" value="NC_009727.1"/>
</dbReference>
<dbReference type="SMR" id="A9KGZ8"/>
<dbReference type="KEGG" id="cbd:CBUD_2079"/>
<dbReference type="HOGENOM" id="CLU_041220_0_1_6"/>
<dbReference type="Proteomes" id="UP000008555">
    <property type="component" value="Chromosome"/>
</dbReference>
<dbReference type="GO" id="GO:0005829">
    <property type="term" value="C:cytosol"/>
    <property type="evidence" value="ECO:0007669"/>
    <property type="project" value="TreeGrafter"/>
</dbReference>
<dbReference type="GO" id="GO:0052908">
    <property type="term" value="F:16S rRNA (adenine(1518)-N(6)/adenine(1519)-N(6))-dimethyltransferase activity"/>
    <property type="evidence" value="ECO:0007669"/>
    <property type="project" value="UniProtKB-EC"/>
</dbReference>
<dbReference type="GO" id="GO:0003723">
    <property type="term" value="F:RNA binding"/>
    <property type="evidence" value="ECO:0007669"/>
    <property type="project" value="UniProtKB-KW"/>
</dbReference>
<dbReference type="FunFam" id="1.10.8.100:FF:000003">
    <property type="entry name" value="Ribosomal RNA small subunit methyltransferase A"/>
    <property type="match status" value="1"/>
</dbReference>
<dbReference type="FunFam" id="3.40.50.150:FF:000006">
    <property type="entry name" value="Ribosomal RNA small subunit methyltransferase A"/>
    <property type="match status" value="1"/>
</dbReference>
<dbReference type="Gene3D" id="1.10.8.100">
    <property type="entry name" value="Ribosomal RNA adenine dimethylase-like, domain 2"/>
    <property type="match status" value="1"/>
</dbReference>
<dbReference type="Gene3D" id="3.40.50.150">
    <property type="entry name" value="Vaccinia Virus protein VP39"/>
    <property type="match status" value="1"/>
</dbReference>
<dbReference type="HAMAP" id="MF_00607">
    <property type="entry name" value="16SrRNA_methyltr_A"/>
    <property type="match status" value="1"/>
</dbReference>
<dbReference type="InterPro" id="IPR001737">
    <property type="entry name" value="KsgA/Erm"/>
</dbReference>
<dbReference type="InterPro" id="IPR023165">
    <property type="entry name" value="rRNA_Ade_diMease-like_C"/>
</dbReference>
<dbReference type="InterPro" id="IPR020596">
    <property type="entry name" value="rRNA_Ade_Mease_Trfase_CS"/>
</dbReference>
<dbReference type="InterPro" id="IPR020598">
    <property type="entry name" value="rRNA_Ade_methylase_Trfase_N"/>
</dbReference>
<dbReference type="InterPro" id="IPR011530">
    <property type="entry name" value="rRNA_adenine_dimethylase"/>
</dbReference>
<dbReference type="InterPro" id="IPR029063">
    <property type="entry name" value="SAM-dependent_MTases_sf"/>
</dbReference>
<dbReference type="NCBIfam" id="TIGR00755">
    <property type="entry name" value="ksgA"/>
    <property type="match status" value="1"/>
</dbReference>
<dbReference type="PANTHER" id="PTHR11727">
    <property type="entry name" value="DIMETHYLADENOSINE TRANSFERASE"/>
    <property type="match status" value="1"/>
</dbReference>
<dbReference type="PANTHER" id="PTHR11727:SF7">
    <property type="entry name" value="DIMETHYLADENOSINE TRANSFERASE-RELATED"/>
    <property type="match status" value="1"/>
</dbReference>
<dbReference type="Pfam" id="PF00398">
    <property type="entry name" value="RrnaAD"/>
    <property type="match status" value="1"/>
</dbReference>
<dbReference type="SMART" id="SM00650">
    <property type="entry name" value="rADc"/>
    <property type="match status" value="1"/>
</dbReference>
<dbReference type="SUPFAM" id="SSF53335">
    <property type="entry name" value="S-adenosyl-L-methionine-dependent methyltransferases"/>
    <property type="match status" value="1"/>
</dbReference>
<dbReference type="PROSITE" id="PS01131">
    <property type="entry name" value="RRNA_A_DIMETH"/>
    <property type="match status" value="1"/>
</dbReference>
<dbReference type="PROSITE" id="PS51689">
    <property type="entry name" value="SAM_RNA_A_N6_MT"/>
    <property type="match status" value="1"/>
</dbReference>
<gene>
    <name evidence="1" type="primary">rsmA</name>
    <name evidence="1" type="synonym">ksgA</name>
    <name type="ordered locus">CBUD_2079</name>
</gene>
<organism>
    <name type="scientific">Coxiella burnetii (strain Dugway 5J108-111)</name>
    <dbReference type="NCBI Taxonomy" id="434922"/>
    <lineage>
        <taxon>Bacteria</taxon>
        <taxon>Pseudomonadati</taxon>
        <taxon>Pseudomonadota</taxon>
        <taxon>Gammaproteobacteria</taxon>
        <taxon>Legionellales</taxon>
        <taxon>Coxiellaceae</taxon>
        <taxon>Coxiella</taxon>
    </lineage>
</organism>
<accession>A9KGZ8</accession>
<protein>
    <recommendedName>
        <fullName evidence="1">Ribosomal RNA small subunit methyltransferase A</fullName>
        <ecNumber evidence="1">2.1.1.182</ecNumber>
    </recommendedName>
    <alternativeName>
        <fullName evidence="1">16S rRNA (adenine(1518)-N(6)/adenine(1519)-N(6))-dimethyltransferase</fullName>
    </alternativeName>
    <alternativeName>
        <fullName evidence="1">16S rRNA dimethyladenosine transferase</fullName>
    </alternativeName>
    <alternativeName>
        <fullName evidence="1">16S rRNA dimethylase</fullName>
    </alternativeName>
    <alternativeName>
        <fullName evidence="1">S-adenosylmethionine-6-N', N'-adenosyl(rRNA) dimethyltransferase</fullName>
    </alternativeName>
</protein>
<sequence>MKKMPMRKRFGQHFLHDSFVLQKIVSAIHPQKTDTLVEIGPGRGALTDYLLTECDNLALVEIDGDLVAFLQKKYNQQKNITIYQNDALQFDFSSVKTDKPLRVVGNLPYNISTPLLFHLFSQIHCIEDMHFMLQKEVVRRITAEVGSHDYGRLSVMAQYFCDNTYLFTVSPQAFTPPPRVESAIIRLIPRHNFTPVAKNLDQLSHVVKEAFSYRRKTVGNALKKLINPSQWPLLEINPQLRPQELTVEDFVKISNILN</sequence>
<proteinExistence type="inferred from homology"/>
<feature type="chain" id="PRO_1000130263" description="Ribosomal RNA small subunit methyltransferase A">
    <location>
        <begin position="1"/>
        <end position="258"/>
    </location>
</feature>
<feature type="binding site" evidence="1">
    <location>
        <position position="13"/>
    </location>
    <ligand>
        <name>S-adenosyl-L-methionine</name>
        <dbReference type="ChEBI" id="CHEBI:59789"/>
    </ligand>
</feature>
<feature type="binding site" evidence="1">
    <location>
        <position position="15"/>
    </location>
    <ligand>
        <name>S-adenosyl-L-methionine</name>
        <dbReference type="ChEBI" id="CHEBI:59789"/>
    </ligand>
</feature>
<feature type="binding site" evidence="1">
    <location>
        <position position="40"/>
    </location>
    <ligand>
        <name>S-adenosyl-L-methionine</name>
        <dbReference type="ChEBI" id="CHEBI:59789"/>
    </ligand>
</feature>
<feature type="binding site" evidence="1">
    <location>
        <position position="61"/>
    </location>
    <ligand>
        <name>S-adenosyl-L-methionine</name>
        <dbReference type="ChEBI" id="CHEBI:59789"/>
    </ligand>
</feature>
<feature type="binding site" evidence="1">
    <location>
        <position position="86"/>
    </location>
    <ligand>
        <name>S-adenosyl-L-methionine</name>
        <dbReference type="ChEBI" id="CHEBI:59789"/>
    </ligand>
</feature>
<feature type="binding site" evidence="1">
    <location>
        <position position="106"/>
    </location>
    <ligand>
        <name>S-adenosyl-L-methionine</name>
        <dbReference type="ChEBI" id="CHEBI:59789"/>
    </ligand>
</feature>
<keyword id="KW-0963">Cytoplasm</keyword>
<keyword id="KW-0489">Methyltransferase</keyword>
<keyword id="KW-0694">RNA-binding</keyword>
<keyword id="KW-0698">rRNA processing</keyword>
<keyword id="KW-0949">S-adenosyl-L-methionine</keyword>
<keyword id="KW-0808">Transferase</keyword>